<protein>
    <recommendedName>
        <fullName evidence="1">Small ribosomal subunit protein uS13</fullName>
    </recommendedName>
    <alternativeName>
        <fullName evidence="3">30S ribosomal protein S13</fullName>
    </alternativeName>
</protein>
<sequence length="121" mass="13426">MARIAGVDIPNDKRVVISLTYVYGIGLATSKKILAAAGISEDIRVKDLTSDQEDAIRREVDAIKVEGDLRREVNMNIKRLMEIGSYRGIRHRRGLPVRGQNTKNNARTRKGKAVAIAGKKK</sequence>
<gene>
    <name evidence="1" type="primary">rpsM</name>
    <name type="ordered locus">MGAS2096_Spy0071</name>
</gene>
<feature type="chain" id="PRO_0000306718" description="Small ribosomal subunit protein uS13">
    <location>
        <begin position="1"/>
        <end position="121"/>
    </location>
</feature>
<feature type="region of interest" description="Disordered" evidence="2">
    <location>
        <begin position="96"/>
        <end position="121"/>
    </location>
</feature>
<feature type="compositionally biased region" description="Basic residues" evidence="2">
    <location>
        <begin position="106"/>
        <end position="121"/>
    </location>
</feature>
<organism>
    <name type="scientific">Streptococcus pyogenes serotype M12 (strain MGAS2096)</name>
    <dbReference type="NCBI Taxonomy" id="370553"/>
    <lineage>
        <taxon>Bacteria</taxon>
        <taxon>Bacillati</taxon>
        <taxon>Bacillota</taxon>
        <taxon>Bacilli</taxon>
        <taxon>Lactobacillales</taxon>
        <taxon>Streptococcaceae</taxon>
        <taxon>Streptococcus</taxon>
    </lineage>
</organism>
<evidence type="ECO:0000255" key="1">
    <source>
        <dbReference type="HAMAP-Rule" id="MF_01315"/>
    </source>
</evidence>
<evidence type="ECO:0000256" key="2">
    <source>
        <dbReference type="SAM" id="MobiDB-lite"/>
    </source>
</evidence>
<evidence type="ECO:0000305" key="3"/>
<proteinExistence type="inferred from homology"/>
<comment type="function">
    <text evidence="1">Located at the top of the head of the 30S subunit, it contacts several helices of the 16S rRNA. In the 70S ribosome it contacts the 23S rRNA (bridge B1a) and protein L5 of the 50S subunit (bridge B1b), connecting the 2 subunits; these bridges are implicated in subunit movement. Contacts the tRNAs in the A and P-sites.</text>
</comment>
<comment type="subunit">
    <text evidence="1">Part of the 30S ribosomal subunit. Forms a loose heterodimer with protein S19. Forms two bridges to the 50S subunit in the 70S ribosome.</text>
</comment>
<comment type="similarity">
    <text evidence="1">Belongs to the universal ribosomal protein uS13 family.</text>
</comment>
<dbReference type="EMBL" id="CP000261">
    <property type="protein sequence ID" value="ABF35123.1"/>
    <property type="molecule type" value="Genomic_DNA"/>
</dbReference>
<dbReference type="SMR" id="Q1JE35"/>
<dbReference type="KEGG" id="spj:MGAS2096_Spy0071"/>
<dbReference type="HOGENOM" id="CLU_103849_1_1_9"/>
<dbReference type="GO" id="GO:0005829">
    <property type="term" value="C:cytosol"/>
    <property type="evidence" value="ECO:0007669"/>
    <property type="project" value="TreeGrafter"/>
</dbReference>
<dbReference type="GO" id="GO:0015935">
    <property type="term" value="C:small ribosomal subunit"/>
    <property type="evidence" value="ECO:0007669"/>
    <property type="project" value="TreeGrafter"/>
</dbReference>
<dbReference type="GO" id="GO:0019843">
    <property type="term" value="F:rRNA binding"/>
    <property type="evidence" value="ECO:0007669"/>
    <property type="project" value="UniProtKB-UniRule"/>
</dbReference>
<dbReference type="GO" id="GO:0003735">
    <property type="term" value="F:structural constituent of ribosome"/>
    <property type="evidence" value="ECO:0007669"/>
    <property type="project" value="InterPro"/>
</dbReference>
<dbReference type="GO" id="GO:0000049">
    <property type="term" value="F:tRNA binding"/>
    <property type="evidence" value="ECO:0007669"/>
    <property type="project" value="UniProtKB-UniRule"/>
</dbReference>
<dbReference type="GO" id="GO:0006412">
    <property type="term" value="P:translation"/>
    <property type="evidence" value="ECO:0007669"/>
    <property type="project" value="UniProtKB-UniRule"/>
</dbReference>
<dbReference type="FunFam" id="1.10.8.50:FF:000001">
    <property type="entry name" value="30S ribosomal protein S13"/>
    <property type="match status" value="1"/>
</dbReference>
<dbReference type="FunFam" id="4.10.910.10:FF:000001">
    <property type="entry name" value="30S ribosomal protein S13"/>
    <property type="match status" value="1"/>
</dbReference>
<dbReference type="Gene3D" id="1.10.8.50">
    <property type="match status" value="1"/>
</dbReference>
<dbReference type="Gene3D" id="4.10.910.10">
    <property type="entry name" value="30s ribosomal protein s13, domain 2"/>
    <property type="match status" value="1"/>
</dbReference>
<dbReference type="HAMAP" id="MF_01315">
    <property type="entry name" value="Ribosomal_uS13"/>
    <property type="match status" value="1"/>
</dbReference>
<dbReference type="InterPro" id="IPR027437">
    <property type="entry name" value="Rbsml_uS13_C"/>
</dbReference>
<dbReference type="InterPro" id="IPR001892">
    <property type="entry name" value="Ribosomal_uS13"/>
</dbReference>
<dbReference type="InterPro" id="IPR010979">
    <property type="entry name" value="Ribosomal_uS13-like_H2TH"/>
</dbReference>
<dbReference type="InterPro" id="IPR019980">
    <property type="entry name" value="Ribosomal_uS13_bac-type"/>
</dbReference>
<dbReference type="InterPro" id="IPR018269">
    <property type="entry name" value="Ribosomal_uS13_CS"/>
</dbReference>
<dbReference type="NCBIfam" id="TIGR03631">
    <property type="entry name" value="uS13_bact"/>
    <property type="match status" value="1"/>
</dbReference>
<dbReference type="PANTHER" id="PTHR10871">
    <property type="entry name" value="30S RIBOSOMAL PROTEIN S13/40S RIBOSOMAL PROTEIN S18"/>
    <property type="match status" value="1"/>
</dbReference>
<dbReference type="PANTHER" id="PTHR10871:SF1">
    <property type="entry name" value="SMALL RIBOSOMAL SUBUNIT PROTEIN US13M"/>
    <property type="match status" value="1"/>
</dbReference>
<dbReference type="Pfam" id="PF00416">
    <property type="entry name" value="Ribosomal_S13"/>
    <property type="match status" value="1"/>
</dbReference>
<dbReference type="PIRSF" id="PIRSF002134">
    <property type="entry name" value="Ribosomal_S13"/>
    <property type="match status" value="1"/>
</dbReference>
<dbReference type="SUPFAM" id="SSF46946">
    <property type="entry name" value="S13-like H2TH domain"/>
    <property type="match status" value="1"/>
</dbReference>
<dbReference type="PROSITE" id="PS00646">
    <property type="entry name" value="RIBOSOMAL_S13_1"/>
    <property type="match status" value="1"/>
</dbReference>
<dbReference type="PROSITE" id="PS50159">
    <property type="entry name" value="RIBOSOMAL_S13_2"/>
    <property type="match status" value="1"/>
</dbReference>
<name>RS13_STRPB</name>
<keyword id="KW-0687">Ribonucleoprotein</keyword>
<keyword id="KW-0689">Ribosomal protein</keyword>
<keyword id="KW-0694">RNA-binding</keyword>
<keyword id="KW-0699">rRNA-binding</keyword>
<keyword id="KW-0820">tRNA-binding</keyword>
<reference key="1">
    <citation type="journal article" date="2006" name="Proc. Natl. Acad. Sci. U.S.A.">
        <title>Molecular genetic anatomy of inter- and intraserotype variation in the human bacterial pathogen group A Streptococcus.</title>
        <authorList>
            <person name="Beres S.B."/>
            <person name="Richter E.W."/>
            <person name="Nagiec M.J."/>
            <person name="Sumby P."/>
            <person name="Porcella S.F."/>
            <person name="DeLeo F.R."/>
            <person name="Musser J.M."/>
        </authorList>
    </citation>
    <scope>NUCLEOTIDE SEQUENCE [LARGE SCALE GENOMIC DNA]</scope>
    <source>
        <strain>MGAS2096</strain>
    </source>
</reference>
<accession>Q1JE35</accession>